<proteinExistence type="inferred from homology"/>
<comment type="function">
    <text evidence="1">Endonuclease that specifically degrades the RNA of RNA-DNA hybrids.</text>
</comment>
<comment type="catalytic activity">
    <reaction evidence="1">
        <text>Endonucleolytic cleavage to 5'-phosphomonoester.</text>
        <dbReference type="EC" id="3.1.26.4"/>
    </reaction>
</comment>
<comment type="cofactor">
    <cofactor evidence="1">
        <name>Mn(2+)</name>
        <dbReference type="ChEBI" id="CHEBI:29035"/>
    </cofactor>
    <cofactor evidence="1">
        <name>Mg(2+)</name>
        <dbReference type="ChEBI" id="CHEBI:18420"/>
    </cofactor>
    <text evidence="1">Manganese or magnesium. Binds 1 divalent metal ion per monomer in the absence of substrate. May bind a second metal ion after substrate binding.</text>
</comment>
<comment type="subcellular location">
    <subcellularLocation>
        <location evidence="1">Cytoplasm</location>
    </subcellularLocation>
</comment>
<comment type="similarity">
    <text evidence="1">Belongs to the RNase HII family.</text>
</comment>
<sequence length="278" mass="29675">MPHRARDTVLEPPELRARREFPVAWAGAGPQHPGMIRKAPKSDAAPPAKGVIAVAPPSFRRERALLKRGIWPVAGCDEAGRGPLAGPVVAAAVVLDPKRIPKGLDDSKKLTAEKREALFEEICATASFAVAYASPARIERDNILRASLWALARAVQALPEPPKHVFVDGRDKIITPCDCDAVIGGDALVLSIAAASIIAKVARDRLMCRLAEDCPGYGFDHHKGYGVPEHLAALDRLGPTKHHRKLFAPVAAAWDKHAPGERETAAAPPDLFGLSASA</sequence>
<keyword id="KW-0963">Cytoplasm</keyword>
<keyword id="KW-0255">Endonuclease</keyword>
<keyword id="KW-0378">Hydrolase</keyword>
<keyword id="KW-0464">Manganese</keyword>
<keyword id="KW-0479">Metal-binding</keyword>
<keyword id="KW-0540">Nuclease</keyword>
<dbReference type="EC" id="3.1.26.4" evidence="1"/>
<dbReference type="EMBL" id="CP000463">
    <property type="protein sequence ID" value="ABJ08348.1"/>
    <property type="molecule type" value="Genomic_DNA"/>
</dbReference>
<dbReference type="SMR" id="Q07I86"/>
<dbReference type="STRING" id="316055.RPE_4424"/>
<dbReference type="KEGG" id="rpe:RPE_4424"/>
<dbReference type="eggNOG" id="COG0164">
    <property type="taxonomic scope" value="Bacteria"/>
</dbReference>
<dbReference type="HOGENOM" id="CLU_036532_2_2_5"/>
<dbReference type="OrthoDB" id="9803420at2"/>
<dbReference type="GO" id="GO:0005737">
    <property type="term" value="C:cytoplasm"/>
    <property type="evidence" value="ECO:0007669"/>
    <property type="project" value="UniProtKB-SubCell"/>
</dbReference>
<dbReference type="GO" id="GO:0032299">
    <property type="term" value="C:ribonuclease H2 complex"/>
    <property type="evidence" value="ECO:0007669"/>
    <property type="project" value="TreeGrafter"/>
</dbReference>
<dbReference type="GO" id="GO:0030145">
    <property type="term" value="F:manganese ion binding"/>
    <property type="evidence" value="ECO:0007669"/>
    <property type="project" value="UniProtKB-UniRule"/>
</dbReference>
<dbReference type="GO" id="GO:0003723">
    <property type="term" value="F:RNA binding"/>
    <property type="evidence" value="ECO:0007669"/>
    <property type="project" value="InterPro"/>
</dbReference>
<dbReference type="GO" id="GO:0004523">
    <property type="term" value="F:RNA-DNA hybrid ribonuclease activity"/>
    <property type="evidence" value="ECO:0007669"/>
    <property type="project" value="UniProtKB-UniRule"/>
</dbReference>
<dbReference type="GO" id="GO:0043137">
    <property type="term" value="P:DNA replication, removal of RNA primer"/>
    <property type="evidence" value="ECO:0007669"/>
    <property type="project" value="TreeGrafter"/>
</dbReference>
<dbReference type="GO" id="GO:0006298">
    <property type="term" value="P:mismatch repair"/>
    <property type="evidence" value="ECO:0007669"/>
    <property type="project" value="TreeGrafter"/>
</dbReference>
<dbReference type="CDD" id="cd07182">
    <property type="entry name" value="RNase_HII_bacteria_HII_like"/>
    <property type="match status" value="1"/>
</dbReference>
<dbReference type="FunFam" id="3.30.420.10:FF:000078">
    <property type="entry name" value="Ribonuclease HII"/>
    <property type="match status" value="1"/>
</dbReference>
<dbReference type="Gene3D" id="3.30.420.10">
    <property type="entry name" value="Ribonuclease H-like superfamily/Ribonuclease H"/>
    <property type="match status" value="1"/>
</dbReference>
<dbReference type="HAMAP" id="MF_00052_B">
    <property type="entry name" value="RNase_HII_B"/>
    <property type="match status" value="1"/>
</dbReference>
<dbReference type="InterPro" id="IPR022898">
    <property type="entry name" value="RNase_HII"/>
</dbReference>
<dbReference type="InterPro" id="IPR001352">
    <property type="entry name" value="RNase_HII/HIII"/>
</dbReference>
<dbReference type="InterPro" id="IPR024567">
    <property type="entry name" value="RNase_HII/HIII_dom"/>
</dbReference>
<dbReference type="InterPro" id="IPR012337">
    <property type="entry name" value="RNaseH-like_sf"/>
</dbReference>
<dbReference type="InterPro" id="IPR036397">
    <property type="entry name" value="RNaseH_sf"/>
</dbReference>
<dbReference type="NCBIfam" id="NF000595">
    <property type="entry name" value="PRK00015.1-3"/>
    <property type="match status" value="1"/>
</dbReference>
<dbReference type="PANTHER" id="PTHR10954">
    <property type="entry name" value="RIBONUCLEASE H2 SUBUNIT A"/>
    <property type="match status" value="1"/>
</dbReference>
<dbReference type="PANTHER" id="PTHR10954:SF18">
    <property type="entry name" value="RIBONUCLEASE HII"/>
    <property type="match status" value="1"/>
</dbReference>
<dbReference type="Pfam" id="PF01351">
    <property type="entry name" value="RNase_HII"/>
    <property type="match status" value="1"/>
</dbReference>
<dbReference type="SUPFAM" id="SSF53098">
    <property type="entry name" value="Ribonuclease H-like"/>
    <property type="match status" value="1"/>
</dbReference>
<dbReference type="PROSITE" id="PS51975">
    <property type="entry name" value="RNASE_H_2"/>
    <property type="match status" value="1"/>
</dbReference>
<evidence type="ECO:0000255" key="1">
    <source>
        <dbReference type="HAMAP-Rule" id="MF_00052"/>
    </source>
</evidence>
<evidence type="ECO:0000255" key="2">
    <source>
        <dbReference type="PROSITE-ProRule" id="PRU01319"/>
    </source>
</evidence>
<organism>
    <name type="scientific">Rhodopseudomonas palustris (strain BisA53)</name>
    <dbReference type="NCBI Taxonomy" id="316055"/>
    <lineage>
        <taxon>Bacteria</taxon>
        <taxon>Pseudomonadati</taxon>
        <taxon>Pseudomonadota</taxon>
        <taxon>Alphaproteobacteria</taxon>
        <taxon>Hyphomicrobiales</taxon>
        <taxon>Nitrobacteraceae</taxon>
        <taxon>Rhodopseudomonas</taxon>
    </lineage>
</organism>
<name>RNH2_RHOP5</name>
<reference key="1">
    <citation type="submission" date="2006-09" db="EMBL/GenBank/DDBJ databases">
        <title>Complete sequence of Rhodopseudomonas palustris BisA53.</title>
        <authorList>
            <consortium name="US DOE Joint Genome Institute"/>
            <person name="Copeland A."/>
            <person name="Lucas S."/>
            <person name="Lapidus A."/>
            <person name="Barry K."/>
            <person name="Detter J.C."/>
            <person name="Glavina del Rio T."/>
            <person name="Hammon N."/>
            <person name="Israni S."/>
            <person name="Dalin E."/>
            <person name="Tice H."/>
            <person name="Pitluck S."/>
            <person name="Chain P."/>
            <person name="Malfatti S."/>
            <person name="Shin M."/>
            <person name="Vergez L."/>
            <person name="Schmutz J."/>
            <person name="Larimer F."/>
            <person name="Land M."/>
            <person name="Hauser L."/>
            <person name="Pelletier D.A."/>
            <person name="Kyrpides N."/>
            <person name="Kim E."/>
            <person name="Harwood C.S."/>
            <person name="Oda Y."/>
            <person name="Richardson P."/>
        </authorList>
    </citation>
    <scope>NUCLEOTIDE SEQUENCE [LARGE SCALE GENOMIC DNA]</scope>
    <source>
        <strain>BisA53</strain>
    </source>
</reference>
<gene>
    <name evidence="1" type="primary">rnhB</name>
    <name type="ordered locus">RPE_4424</name>
</gene>
<accession>Q07I86</accession>
<protein>
    <recommendedName>
        <fullName evidence="1">Ribonuclease HII</fullName>
        <shortName evidence="1">RNase HII</shortName>
        <ecNumber evidence="1">3.1.26.4</ecNumber>
    </recommendedName>
</protein>
<feature type="chain" id="PRO_1000031190" description="Ribonuclease HII">
    <location>
        <begin position="1"/>
        <end position="278"/>
    </location>
</feature>
<feature type="domain" description="RNase H type-2" evidence="2">
    <location>
        <begin position="71"/>
        <end position="259"/>
    </location>
</feature>
<feature type="binding site" evidence="1">
    <location>
        <position position="77"/>
    </location>
    <ligand>
        <name>a divalent metal cation</name>
        <dbReference type="ChEBI" id="CHEBI:60240"/>
    </ligand>
</feature>
<feature type="binding site" evidence="1">
    <location>
        <position position="78"/>
    </location>
    <ligand>
        <name>a divalent metal cation</name>
        <dbReference type="ChEBI" id="CHEBI:60240"/>
    </ligand>
</feature>
<feature type="binding site" evidence="1">
    <location>
        <position position="168"/>
    </location>
    <ligand>
        <name>a divalent metal cation</name>
        <dbReference type="ChEBI" id="CHEBI:60240"/>
    </ligand>
</feature>